<accession>Q8L616</accession>
<accession>Q9FN81</accession>
<comment type="subcellular location">
    <subcellularLocation>
        <location evidence="1">Membrane</location>
        <topology evidence="1">Multi-pass membrane protein</topology>
    </subcellularLocation>
</comment>
<comment type="similarity">
    <text evidence="3">Belongs to the multi antimicrobial extrusion (MATE) (TC 2.A.66.1) family.</text>
</comment>
<comment type="sequence caution" evidence="3">
    <conflict type="erroneous gene model prediction">
        <sequence resource="EMBL-CDS" id="BAB09569"/>
    </conflict>
</comment>
<name>DTX25_ARATH</name>
<organism>
    <name type="scientific">Arabidopsis thaliana</name>
    <name type="common">Mouse-ear cress</name>
    <dbReference type="NCBI Taxonomy" id="3702"/>
    <lineage>
        <taxon>Eukaryota</taxon>
        <taxon>Viridiplantae</taxon>
        <taxon>Streptophyta</taxon>
        <taxon>Embryophyta</taxon>
        <taxon>Tracheophyta</taxon>
        <taxon>Spermatophyta</taxon>
        <taxon>Magnoliopsida</taxon>
        <taxon>eudicotyledons</taxon>
        <taxon>Gunneridae</taxon>
        <taxon>Pentapetalae</taxon>
        <taxon>rosids</taxon>
        <taxon>malvids</taxon>
        <taxon>Brassicales</taxon>
        <taxon>Brassicaceae</taxon>
        <taxon>Camelineae</taxon>
        <taxon>Arabidopsis</taxon>
    </lineage>
</organism>
<gene>
    <name evidence="2" type="primary">DTX25</name>
    <name evidence="4" type="ordered locus">At5g17700</name>
    <name evidence="5" type="ORF">MVA3.5</name>
</gene>
<feature type="chain" id="PRO_0000434066" description="Protein DETOXIFICATION 25">
    <location>
        <begin position="1"/>
        <end position="497"/>
    </location>
</feature>
<feature type="transmembrane region" description="Helical" evidence="1">
    <location>
        <begin position="43"/>
        <end position="63"/>
    </location>
</feature>
<feature type="transmembrane region" description="Helical" evidence="1">
    <location>
        <begin position="70"/>
        <end position="90"/>
    </location>
</feature>
<feature type="transmembrane region" description="Helical" evidence="1">
    <location>
        <begin position="121"/>
        <end position="141"/>
    </location>
</feature>
<feature type="transmembrane region" description="Helical" evidence="1">
    <location>
        <begin position="157"/>
        <end position="177"/>
    </location>
</feature>
<feature type="transmembrane region" description="Helical" evidence="1">
    <location>
        <begin position="186"/>
        <end position="206"/>
    </location>
</feature>
<feature type="transmembrane region" description="Helical" evidence="1">
    <location>
        <begin position="216"/>
        <end position="236"/>
    </location>
</feature>
<feature type="transmembrane region" description="Helical" evidence="1">
    <location>
        <begin position="261"/>
        <end position="281"/>
    </location>
</feature>
<feature type="transmembrane region" description="Helical" evidence="1">
    <location>
        <begin position="291"/>
        <end position="311"/>
    </location>
</feature>
<feature type="transmembrane region" description="Helical" evidence="1">
    <location>
        <begin position="339"/>
        <end position="359"/>
    </location>
</feature>
<feature type="transmembrane region" description="Helical" evidence="1">
    <location>
        <begin position="381"/>
        <end position="401"/>
    </location>
</feature>
<feature type="transmembrane region" description="Helical" evidence="1">
    <location>
        <begin position="416"/>
        <end position="436"/>
    </location>
</feature>
<feature type="transmembrane region" description="Helical" evidence="1">
    <location>
        <begin position="438"/>
        <end position="458"/>
    </location>
</feature>
<keyword id="KW-0472">Membrane</keyword>
<keyword id="KW-1185">Reference proteome</keyword>
<keyword id="KW-0812">Transmembrane</keyword>
<keyword id="KW-1133">Transmembrane helix</keyword>
<keyword id="KW-0813">Transport</keyword>
<sequence>MSGGGGEMEERLLNGSETEQRRESLYLRKKIWSEVRKMWRIALPSTLFRVMSFGCVVVAQAFIGHSSETGLAAYALLQSTFIRFIYGIMAGMSSATETLCGQAYGAEQYHMMGIYLQRSWIVDTFIATLFVPFIVLAGPILRLLGQNVVISETVDEIYPWVIPYLYSIVFTMTMQMYLQAQMKNAIIGILSTLALVLDIAATWWCVSVMGMGIHGALLGLNISSWSVAIAEFVYVFGGWCPHTWTGFSTAAFLDLIPMLKLSISSGFMLCLEYWYMSIIVLMSGYAKDANIAISAFSICQYIYSWEMNICFGLMGAACVRVANELGKGDADAVRFSIKVVLVVSAVIGVICSALCLAFGGQISYLFSDSQAVSDAVADLSIVLSISILFNIIQPILSGVAIGAGMQSMVALVNLASYYAIGVPLGVLLVYVFNFGIKGLWSGMLAGVGIQTLILCYVIYKTDWELEVKKTNERMKTWTLNLPAVQSTTISTRDEERK</sequence>
<proteinExistence type="evidence at transcript level"/>
<reference key="1">
    <citation type="journal article" date="1997" name="DNA Res.">
        <title>Structural analysis of Arabidopsis thaliana chromosome 5. II. Sequence features of the regions of 1,044,062 bp covered by thirteen physically assigned P1 clones.</title>
        <authorList>
            <person name="Kotani H."/>
            <person name="Nakamura Y."/>
            <person name="Sato S."/>
            <person name="Kaneko T."/>
            <person name="Asamizu E."/>
            <person name="Miyajima N."/>
            <person name="Tabata S."/>
        </authorList>
    </citation>
    <scope>NUCLEOTIDE SEQUENCE [LARGE SCALE GENOMIC DNA]</scope>
    <source>
        <strain>cv. Columbia</strain>
    </source>
</reference>
<reference key="2">
    <citation type="journal article" date="2017" name="Plant J.">
        <title>Araport11: a complete reannotation of the Arabidopsis thaliana reference genome.</title>
        <authorList>
            <person name="Cheng C.Y."/>
            <person name="Krishnakumar V."/>
            <person name="Chan A.P."/>
            <person name="Thibaud-Nissen F."/>
            <person name="Schobel S."/>
            <person name="Town C.D."/>
        </authorList>
    </citation>
    <scope>GENOME REANNOTATION</scope>
    <source>
        <strain>cv. Columbia</strain>
    </source>
</reference>
<reference key="3">
    <citation type="journal article" date="2003" name="Science">
        <title>Empirical analysis of transcriptional activity in the Arabidopsis genome.</title>
        <authorList>
            <person name="Yamada K."/>
            <person name="Lim J."/>
            <person name="Dale J.M."/>
            <person name="Chen H."/>
            <person name="Shinn P."/>
            <person name="Palm C.J."/>
            <person name="Southwick A.M."/>
            <person name="Wu H.C."/>
            <person name="Kim C.J."/>
            <person name="Nguyen M."/>
            <person name="Pham P.K."/>
            <person name="Cheuk R.F."/>
            <person name="Karlin-Newmann G."/>
            <person name="Liu S.X."/>
            <person name="Lam B."/>
            <person name="Sakano H."/>
            <person name="Wu T."/>
            <person name="Yu G."/>
            <person name="Miranda M."/>
            <person name="Quach H.L."/>
            <person name="Tripp M."/>
            <person name="Chang C.H."/>
            <person name="Lee J.M."/>
            <person name="Toriumi M.J."/>
            <person name="Chan M.M."/>
            <person name="Tang C.C."/>
            <person name="Onodera C.S."/>
            <person name="Deng J.M."/>
            <person name="Akiyama K."/>
            <person name="Ansari Y."/>
            <person name="Arakawa T."/>
            <person name="Banh J."/>
            <person name="Banno F."/>
            <person name="Bowser L."/>
            <person name="Brooks S.Y."/>
            <person name="Carninci P."/>
            <person name="Chao Q."/>
            <person name="Choy N."/>
            <person name="Enju A."/>
            <person name="Goldsmith A.D."/>
            <person name="Gurjal M."/>
            <person name="Hansen N.F."/>
            <person name="Hayashizaki Y."/>
            <person name="Johnson-Hopson C."/>
            <person name="Hsuan V.W."/>
            <person name="Iida K."/>
            <person name="Karnes M."/>
            <person name="Khan S."/>
            <person name="Koesema E."/>
            <person name="Ishida J."/>
            <person name="Jiang P.X."/>
            <person name="Jones T."/>
            <person name="Kawai J."/>
            <person name="Kamiya A."/>
            <person name="Meyers C."/>
            <person name="Nakajima M."/>
            <person name="Narusaka M."/>
            <person name="Seki M."/>
            <person name="Sakurai T."/>
            <person name="Satou M."/>
            <person name="Tamse R."/>
            <person name="Vaysberg M."/>
            <person name="Wallender E.K."/>
            <person name="Wong C."/>
            <person name="Yamamura Y."/>
            <person name="Yuan S."/>
            <person name="Shinozaki K."/>
            <person name="Davis R.W."/>
            <person name="Theologis A."/>
            <person name="Ecker J.R."/>
        </authorList>
    </citation>
    <scope>NUCLEOTIDE SEQUENCE [LARGE SCALE MRNA]</scope>
    <source>
        <strain>cv. Columbia</strain>
    </source>
</reference>
<reference key="4">
    <citation type="journal article" date="2002" name="J. Biol. Chem.">
        <title>Functional cloning and characterization of a plant efflux carrier for multidrug and heavy metal detoxification.</title>
        <authorList>
            <person name="Li L."/>
            <person name="He Z."/>
            <person name="Pandey G.K."/>
            <person name="Tsuchiya T."/>
            <person name="Luan S."/>
        </authorList>
    </citation>
    <scope>GENE FAMILY</scope>
    <scope>NOMENCLATURE</scope>
</reference>
<reference key="5">
    <citation type="journal article" date="2003" name="Eur. J. Biochem.">
        <title>The multidrug/oligosaccharidyl-lipid/polysaccharide (MOP) exporter superfamily.</title>
        <authorList>
            <person name="Hvorup R.N."/>
            <person name="Winnen B."/>
            <person name="Chang A.B."/>
            <person name="Jiang Y."/>
            <person name="Zhou X.F."/>
            <person name="Saier M.H. Jr."/>
        </authorList>
    </citation>
    <scope>GENE FAMILY</scope>
</reference>
<evidence type="ECO:0000255" key="1"/>
<evidence type="ECO:0000303" key="2">
    <source>
    </source>
</evidence>
<evidence type="ECO:0000305" key="3"/>
<evidence type="ECO:0000312" key="4">
    <source>
        <dbReference type="Araport" id="AT5G17700"/>
    </source>
</evidence>
<evidence type="ECO:0000312" key="5">
    <source>
        <dbReference type="EMBL" id="BAB09569.1"/>
    </source>
</evidence>
<protein>
    <recommendedName>
        <fullName evidence="2">Protein DETOXIFICATION 25</fullName>
        <shortName evidence="2">AtDTX25</shortName>
    </recommendedName>
    <alternativeName>
        <fullName evidence="3">Multidrug and toxic compound extrusion protein 25</fullName>
        <shortName evidence="3">MATE protein 25</shortName>
    </alternativeName>
</protein>
<dbReference type="EMBL" id="AB006706">
    <property type="protein sequence ID" value="BAB09569.1"/>
    <property type="status" value="ALT_SEQ"/>
    <property type="molecule type" value="Genomic_DNA"/>
</dbReference>
<dbReference type="EMBL" id="CP002688">
    <property type="protein sequence ID" value="AED92457.1"/>
    <property type="molecule type" value="Genomic_DNA"/>
</dbReference>
<dbReference type="EMBL" id="CP002688">
    <property type="protein sequence ID" value="ANM68684.1"/>
    <property type="molecule type" value="Genomic_DNA"/>
</dbReference>
<dbReference type="EMBL" id="AY099666">
    <property type="protein sequence ID" value="AAM20517.1"/>
    <property type="molecule type" value="mRNA"/>
</dbReference>
<dbReference type="EMBL" id="BT000259">
    <property type="protein sequence ID" value="AAN15578.1"/>
    <property type="molecule type" value="mRNA"/>
</dbReference>
<dbReference type="RefSeq" id="NP_001330412.1">
    <property type="nucleotide sequence ID" value="NM_001343520.1"/>
</dbReference>
<dbReference type="RefSeq" id="NP_197272.2">
    <property type="nucleotide sequence ID" value="NM_121776.5"/>
</dbReference>
<dbReference type="SMR" id="Q8L616"/>
<dbReference type="IntAct" id="Q8L616">
    <property type="interactions" value="6"/>
</dbReference>
<dbReference type="STRING" id="3702.Q8L616"/>
<dbReference type="PaxDb" id="3702-AT5G17700.1"/>
<dbReference type="ProteomicsDB" id="224284"/>
<dbReference type="EnsemblPlants" id="AT5G17700.1">
    <property type="protein sequence ID" value="AT5G17700.1"/>
    <property type="gene ID" value="AT5G17700"/>
</dbReference>
<dbReference type="EnsemblPlants" id="AT5G17700.2">
    <property type="protein sequence ID" value="AT5G17700.2"/>
    <property type="gene ID" value="AT5G17700"/>
</dbReference>
<dbReference type="GeneID" id="831637"/>
<dbReference type="Gramene" id="AT5G17700.1">
    <property type="protein sequence ID" value="AT5G17700.1"/>
    <property type="gene ID" value="AT5G17700"/>
</dbReference>
<dbReference type="Gramene" id="AT5G17700.2">
    <property type="protein sequence ID" value="AT5G17700.2"/>
    <property type="gene ID" value="AT5G17700"/>
</dbReference>
<dbReference type="KEGG" id="ath:AT5G17700"/>
<dbReference type="Araport" id="AT5G17700"/>
<dbReference type="TAIR" id="AT5G17700"/>
<dbReference type="eggNOG" id="KOG1347">
    <property type="taxonomic scope" value="Eukaryota"/>
</dbReference>
<dbReference type="HOGENOM" id="CLU_012893_1_4_1"/>
<dbReference type="InParanoid" id="Q8L616"/>
<dbReference type="OMA" id="INIFRFG"/>
<dbReference type="OrthoDB" id="2126698at2759"/>
<dbReference type="PhylomeDB" id="Q8L616"/>
<dbReference type="PRO" id="PR:Q8L616"/>
<dbReference type="Proteomes" id="UP000006548">
    <property type="component" value="Chromosome 5"/>
</dbReference>
<dbReference type="ExpressionAtlas" id="Q8L616">
    <property type="expression patterns" value="baseline and differential"/>
</dbReference>
<dbReference type="GO" id="GO:0016020">
    <property type="term" value="C:membrane"/>
    <property type="evidence" value="ECO:0007669"/>
    <property type="project" value="UniProtKB-SubCell"/>
</dbReference>
<dbReference type="GO" id="GO:0015297">
    <property type="term" value="F:antiporter activity"/>
    <property type="evidence" value="ECO:0007669"/>
    <property type="project" value="InterPro"/>
</dbReference>
<dbReference type="GO" id="GO:0042910">
    <property type="term" value="F:xenobiotic transmembrane transporter activity"/>
    <property type="evidence" value="ECO:0007669"/>
    <property type="project" value="InterPro"/>
</dbReference>
<dbReference type="GO" id="GO:1990961">
    <property type="term" value="P:xenobiotic detoxification by transmembrane export across the plasma membrane"/>
    <property type="evidence" value="ECO:0007669"/>
    <property type="project" value="InterPro"/>
</dbReference>
<dbReference type="CDD" id="cd13132">
    <property type="entry name" value="MATE_eukaryotic"/>
    <property type="match status" value="1"/>
</dbReference>
<dbReference type="InterPro" id="IPR045069">
    <property type="entry name" value="MATE_euk"/>
</dbReference>
<dbReference type="InterPro" id="IPR002528">
    <property type="entry name" value="MATE_fam"/>
</dbReference>
<dbReference type="NCBIfam" id="TIGR00797">
    <property type="entry name" value="matE"/>
    <property type="match status" value="1"/>
</dbReference>
<dbReference type="PANTHER" id="PTHR11206">
    <property type="entry name" value="MULTIDRUG RESISTANCE PROTEIN"/>
    <property type="match status" value="1"/>
</dbReference>
<dbReference type="Pfam" id="PF01554">
    <property type="entry name" value="MatE"/>
    <property type="match status" value="2"/>
</dbReference>